<name>YABA_LISIN</name>
<keyword id="KW-0963">Cytoplasm</keyword>
<keyword id="KW-0235">DNA replication</keyword>
<keyword id="KW-0236">DNA replication inhibitor</keyword>
<keyword id="KW-0479">Metal-binding</keyword>
<keyword id="KW-0862">Zinc</keyword>
<gene>
    <name evidence="1" type="primary">yabA</name>
    <name type="ordered locus">lin0207</name>
</gene>
<protein>
    <recommendedName>
        <fullName evidence="1">Replication initiation control protein YabA</fullName>
    </recommendedName>
</protein>
<comment type="function">
    <text evidence="1">Involved in control of chromosome replication initiation. Inhibits the cooperative binding of DnaA to the oriC region, thus negatively regulating initiation of chromosome replication. Inhibits the ability of DnaA-ATP to form a helix on DNA; does not disassemble preformed DnaA-DNA helices. Decreases the residence time of DnaA on the chromosome at its binding sites (oriC, replication forks and promoter-binding sites). Tethers DnaA to the replication machinery via the DNA polymerase beta sliding clamp subunit (dnaN). Associates with oriC and other DnaA targets on the chromosome in a DnaA-dependent manner.</text>
</comment>
<comment type="cofactor">
    <cofactor evidence="1">
        <name>Zn(2+)</name>
        <dbReference type="ChEBI" id="CHEBI:29105"/>
    </cofactor>
    <text evidence="1">Binds 1 zinc ion per subunit.</text>
</comment>
<comment type="subunit">
    <text evidence="1">Homotetramer. Interacts with both DnaA and DnaN, acting as a bridge between these two proteins.</text>
</comment>
<comment type="subcellular location">
    <subcellularLocation>
        <location evidence="1">Cytoplasm</location>
        <location evidence="1">Nucleoid</location>
    </subcellularLocation>
    <text evidence="1">Localizes in tight foci, which correspond to the replisome at mid-cell throughout the cell cycle.</text>
</comment>
<comment type="similarity">
    <text evidence="1">Belongs to the YabA family.</text>
</comment>
<evidence type="ECO:0000255" key="1">
    <source>
        <dbReference type="HAMAP-Rule" id="MF_01159"/>
    </source>
</evidence>
<feature type="chain" id="PRO_0000211911" description="Replication initiation control protein YabA">
    <location>
        <begin position="1"/>
        <end position="129"/>
    </location>
</feature>
<feature type="binding site" evidence="1">
    <location>
        <position position="103"/>
    </location>
    <ligand>
        <name>Zn(2+)</name>
        <dbReference type="ChEBI" id="CHEBI:29105"/>
    </ligand>
</feature>
<feature type="binding site" evidence="1">
    <location>
        <position position="105"/>
    </location>
    <ligand>
        <name>Zn(2+)</name>
        <dbReference type="ChEBI" id="CHEBI:29105"/>
    </ligand>
</feature>
<feature type="binding site" evidence="1">
    <location>
        <position position="119"/>
    </location>
    <ligand>
        <name>Zn(2+)</name>
        <dbReference type="ChEBI" id="CHEBI:29105"/>
    </ligand>
</feature>
<feature type="binding site" evidence="1">
    <location>
        <position position="122"/>
    </location>
    <ligand>
        <name>Zn(2+)</name>
        <dbReference type="ChEBI" id="CHEBI:29105"/>
    </ligand>
</feature>
<reference key="1">
    <citation type="journal article" date="2001" name="Science">
        <title>Comparative genomics of Listeria species.</title>
        <authorList>
            <person name="Glaser P."/>
            <person name="Frangeul L."/>
            <person name="Buchrieser C."/>
            <person name="Rusniok C."/>
            <person name="Amend A."/>
            <person name="Baquero F."/>
            <person name="Berche P."/>
            <person name="Bloecker H."/>
            <person name="Brandt P."/>
            <person name="Chakraborty T."/>
            <person name="Charbit A."/>
            <person name="Chetouani F."/>
            <person name="Couve E."/>
            <person name="de Daruvar A."/>
            <person name="Dehoux P."/>
            <person name="Domann E."/>
            <person name="Dominguez-Bernal G."/>
            <person name="Duchaud E."/>
            <person name="Durant L."/>
            <person name="Dussurget O."/>
            <person name="Entian K.-D."/>
            <person name="Fsihi H."/>
            <person name="Garcia-del Portillo F."/>
            <person name="Garrido P."/>
            <person name="Gautier L."/>
            <person name="Goebel W."/>
            <person name="Gomez-Lopez N."/>
            <person name="Hain T."/>
            <person name="Hauf J."/>
            <person name="Jackson D."/>
            <person name="Jones L.-M."/>
            <person name="Kaerst U."/>
            <person name="Kreft J."/>
            <person name="Kuhn M."/>
            <person name="Kunst F."/>
            <person name="Kurapkat G."/>
            <person name="Madueno E."/>
            <person name="Maitournam A."/>
            <person name="Mata Vicente J."/>
            <person name="Ng E."/>
            <person name="Nedjari H."/>
            <person name="Nordsiek G."/>
            <person name="Novella S."/>
            <person name="de Pablos B."/>
            <person name="Perez-Diaz J.-C."/>
            <person name="Purcell R."/>
            <person name="Remmel B."/>
            <person name="Rose M."/>
            <person name="Schlueter T."/>
            <person name="Simoes N."/>
            <person name="Tierrez A."/>
            <person name="Vazquez-Boland J.-A."/>
            <person name="Voss H."/>
            <person name="Wehland J."/>
            <person name="Cossart P."/>
        </authorList>
    </citation>
    <scope>NUCLEOTIDE SEQUENCE [LARGE SCALE GENOMIC DNA]</scope>
    <source>
        <strain>ATCC BAA-680 / CLIP 11262</strain>
    </source>
</reference>
<organism>
    <name type="scientific">Listeria innocua serovar 6a (strain ATCC BAA-680 / CLIP 11262)</name>
    <dbReference type="NCBI Taxonomy" id="272626"/>
    <lineage>
        <taxon>Bacteria</taxon>
        <taxon>Bacillati</taxon>
        <taxon>Bacillota</taxon>
        <taxon>Bacilli</taxon>
        <taxon>Bacillales</taxon>
        <taxon>Listeriaceae</taxon>
        <taxon>Listeria</taxon>
    </lineage>
</organism>
<sequence>MDKKAIFDSVSNMEEQIGELYQQLGDLKTNLGEMLEENNRLNLENEHLRRRLSLTDEVAPEPVAEEEAVHGVMAPNRKEAMQQMIELGEGYDNLVQLYKEGFHVCNVHFGSPRGNDEDCLFCLSLLNKK</sequence>
<proteinExistence type="inferred from homology"/>
<accession>Q92F99</accession>
<dbReference type="EMBL" id="AL596163">
    <property type="protein sequence ID" value="CAC95440.1"/>
    <property type="molecule type" value="Genomic_DNA"/>
</dbReference>
<dbReference type="PIR" id="AH1458">
    <property type="entry name" value="AH1458"/>
</dbReference>
<dbReference type="RefSeq" id="WP_010990275.1">
    <property type="nucleotide sequence ID" value="NC_003212.1"/>
</dbReference>
<dbReference type="SMR" id="Q92F99"/>
<dbReference type="STRING" id="272626.gene:17564519"/>
<dbReference type="DNASU" id="1128609"/>
<dbReference type="GeneID" id="93233642"/>
<dbReference type="KEGG" id="lin:lin0207"/>
<dbReference type="eggNOG" id="COG4467">
    <property type="taxonomic scope" value="Bacteria"/>
</dbReference>
<dbReference type="HOGENOM" id="CLU_157169_0_0_9"/>
<dbReference type="OrthoDB" id="2112130at2"/>
<dbReference type="Proteomes" id="UP000002513">
    <property type="component" value="Chromosome"/>
</dbReference>
<dbReference type="GO" id="GO:0009295">
    <property type="term" value="C:nucleoid"/>
    <property type="evidence" value="ECO:0007669"/>
    <property type="project" value="UniProtKB-SubCell"/>
</dbReference>
<dbReference type="GO" id="GO:0006260">
    <property type="term" value="P:DNA replication"/>
    <property type="evidence" value="ECO:0007669"/>
    <property type="project" value="UniProtKB-UniRule"/>
</dbReference>
<dbReference type="HAMAP" id="MF_01159">
    <property type="entry name" value="YabA"/>
    <property type="match status" value="1"/>
</dbReference>
<dbReference type="InterPro" id="IPR010377">
    <property type="entry name" value="YabA"/>
</dbReference>
<dbReference type="NCBIfam" id="NF009643">
    <property type="entry name" value="PRK13169.1-4"/>
    <property type="match status" value="1"/>
</dbReference>
<dbReference type="NCBIfam" id="NF009644">
    <property type="entry name" value="PRK13169.1-5"/>
    <property type="match status" value="1"/>
</dbReference>
<dbReference type="Pfam" id="PF06156">
    <property type="entry name" value="YabA"/>
    <property type="match status" value="1"/>
</dbReference>
<dbReference type="PIRSF" id="PIRSF021439">
    <property type="entry name" value="DUF972"/>
    <property type="match status" value="1"/>
</dbReference>